<keyword id="KW-0249">Electron transport</keyword>
<keyword id="KW-0349">Heme</keyword>
<keyword id="KW-0408">Iron</keyword>
<keyword id="KW-0472">Membrane</keyword>
<keyword id="KW-0479">Metal-binding</keyword>
<keyword id="KW-0496">Mitochondrion</keyword>
<keyword id="KW-0999">Mitochondrion inner membrane</keyword>
<keyword id="KW-0679">Respiratory chain</keyword>
<keyword id="KW-0812">Transmembrane</keyword>
<keyword id="KW-1133">Transmembrane helix</keyword>
<keyword id="KW-0813">Transport</keyword>
<keyword id="KW-0830">Ubiquinone</keyword>
<organism>
    <name type="scientific">Galidia elegans</name>
    <name type="common">Malagasy ring-tailed mongoose</name>
    <dbReference type="NCBI Taxonomy" id="61400"/>
    <lineage>
        <taxon>Eukaryota</taxon>
        <taxon>Metazoa</taxon>
        <taxon>Chordata</taxon>
        <taxon>Craniata</taxon>
        <taxon>Vertebrata</taxon>
        <taxon>Euteleostomi</taxon>
        <taxon>Mammalia</taxon>
        <taxon>Eutheria</taxon>
        <taxon>Laurasiatheria</taxon>
        <taxon>Carnivora</taxon>
        <taxon>Feliformia</taxon>
        <taxon>Eupleridae</taxon>
        <taxon>Galidiinae</taxon>
        <taxon>Galidia</taxon>
    </lineage>
</organism>
<name>CYB_GALEE</name>
<comment type="function">
    <text evidence="2">Component of the ubiquinol-cytochrome c reductase complex (complex III or cytochrome b-c1 complex) that is part of the mitochondrial respiratory chain. The b-c1 complex mediates electron transfer from ubiquinol to cytochrome c. Contributes to the generation of a proton gradient across the mitochondrial membrane that is then used for ATP synthesis.</text>
</comment>
<comment type="cofactor">
    <cofactor evidence="2">
        <name>heme b</name>
        <dbReference type="ChEBI" id="CHEBI:60344"/>
    </cofactor>
    <text evidence="2">Binds 2 heme b groups non-covalently.</text>
</comment>
<comment type="subunit">
    <text evidence="2">The cytochrome bc1 complex contains 11 subunits: 3 respiratory subunits (MT-CYB, CYC1 and UQCRFS1), 2 core proteins (UQCRC1 and UQCRC2) and 6 low-molecular weight proteins (UQCRH/QCR6, UQCRB/QCR7, UQCRQ/QCR8, UQCR10/QCR9, UQCR11/QCR10 and a cleavage product of UQCRFS1). This cytochrome bc1 complex then forms a dimer.</text>
</comment>
<comment type="subcellular location">
    <subcellularLocation>
        <location evidence="2">Mitochondrion inner membrane</location>
        <topology evidence="2">Multi-pass membrane protein</topology>
    </subcellularLocation>
</comment>
<comment type="miscellaneous">
    <text evidence="1">Heme 1 (or BL or b562) is low-potential and absorbs at about 562 nm, and heme 2 (or BH or b566) is high-potential and absorbs at about 566 nm.</text>
</comment>
<comment type="similarity">
    <text evidence="3 4">Belongs to the cytochrome b family.</text>
</comment>
<comment type="caution">
    <text evidence="2">The full-length protein contains only eight transmembrane helices, not nine as predicted by bioinformatics tools.</text>
</comment>
<feature type="chain" id="PRO_0000060984" description="Cytochrome b">
    <location>
        <begin position="1"/>
        <end position="379"/>
    </location>
</feature>
<feature type="transmembrane region" description="Helical" evidence="2">
    <location>
        <begin position="33"/>
        <end position="53"/>
    </location>
</feature>
<feature type="transmembrane region" description="Helical" evidence="2">
    <location>
        <begin position="77"/>
        <end position="98"/>
    </location>
</feature>
<feature type="transmembrane region" description="Helical" evidence="2">
    <location>
        <begin position="113"/>
        <end position="133"/>
    </location>
</feature>
<feature type="transmembrane region" description="Helical" evidence="2">
    <location>
        <begin position="178"/>
        <end position="198"/>
    </location>
</feature>
<feature type="transmembrane region" description="Helical" evidence="2">
    <location>
        <begin position="226"/>
        <end position="246"/>
    </location>
</feature>
<feature type="transmembrane region" description="Helical" evidence="2">
    <location>
        <begin position="288"/>
        <end position="308"/>
    </location>
</feature>
<feature type="transmembrane region" description="Helical" evidence="2">
    <location>
        <begin position="320"/>
        <end position="340"/>
    </location>
</feature>
<feature type="transmembrane region" description="Helical" evidence="2">
    <location>
        <begin position="347"/>
        <end position="367"/>
    </location>
</feature>
<feature type="binding site" description="axial binding residue" evidence="2">
    <location>
        <position position="83"/>
    </location>
    <ligand>
        <name>heme b</name>
        <dbReference type="ChEBI" id="CHEBI:60344"/>
        <label>b562</label>
    </ligand>
    <ligandPart>
        <name>Fe</name>
        <dbReference type="ChEBI" id="CHEBI:18248"/>
    </ligandPart>
</feature>
<feature type="binding site" description="axial binding residue" evidence="2">
    <location>
        <position position="97"/>
    </location>
    <ligand>
        <name>heme b</name>
        <dbReference type="ChEBI" id="CHEBI:60344"/>
        <label>b566</label>
    </ligand>
    <ligandPart>
        <name>Fe</name>
        <dbReference type="ChEBI" id="CHEBI:18248"/>
    </ligandPart>
</feature>
<feature type="binding site" description="axial binding residue" evidence="2">
    <location>
        <position position="182"/>
    </location>
    <ligand>
        <name>heme b</name>
        <dbReference type="ChEBI" id="CHEBI:60344"/>
        <label>b562</label>
    </ligand>
    <ligandPart>
        <name>Fe</name>
        <dbReference type="ChEBI" id="CHEBI:18248"/>
    </ligandPart>
</feature>
<feature type="binding site" description="axial binding residue" evidence="2">
    <location>
        <position position="196"/>
    </location>
    <ligand>
        <name>heme b</name>
        <dbReference type="ChEBI" id="CHEBI:60344"/>
        <label>b566</label>
    </ligand>
    <ligandPart>
        <name>Fe</name>
        <dbReference type="ChEBI" id="CHEBI:18248"/>
    </ligandPart>
</feature>
<feature type="binding site" evidence="2">
    <location>
        <position position="201"/>
    </location>
    <ligand>
        <name>a ubiquinone</name>
        <dbReference type="ChEBI" id="CHEBI:16389"/>
    </ligand>
</feature>
<feature type="sequence variant" description="In strain: Isolate SMG-7470.">
    <original>V</original>
    <variation>I</variation>
    <location>
        <position position="115"/>
    </location>
</feature>
<feature type="sequence variant" description="In strain: Isolate SMG-7470.">
    <original>A</original>
    <variation>T</variation>
    <location>
        <position position="190"/>
    </location>
</feature>
<feature type="sequence variant" description="In strain: Isolate SMG-7470.">
    <original>I</original>
    <variation>M</variation>
    <location>
        <position position="241"/>
    </location>
</feature>
<feature type="sequence variant" description="In strain: Isolate SMG-7470.">
    <original>Y</original>
    <variation>H</variation>
    <location>
        <position position="345"/>
    </location>
</feature>
<feature type="sequence variant" description="In strain: Isolate SMG-7470.">
    <original>I</original>
    <variation>V</variation>
    <location>
        <position position="368"/>
    </location>
</feature>
<protein>
    <recommendedName>
        <fullName>Cytochrome b</fullName>
    </recommendedName>
    <alternativeName>
        <fullName>Complex III subunit 3</fullName>
    </alternativeName>
    <alternativeName>
        <fullName>Complex III subunit III</fullName>
    </alternativeName>
    <alternativeName>
        <fullName>Cytochrome b-c1 complex subunit 3</fullName>
    </alternativeName>
    <alternativeName>
        <fullName>Ubiquinol-cytochrome-c reductase complex cytochrome b subunit</fullName>
    </alternativeName>
</protein>
<evidence type="ECO:0000250" key="1"/>
<evidence type="ECO:0000250" key="2">
    <source>
        <dbReference type="UniProtKB" id="P00157"/>
    </source>
</evidence>
<evidence type="ECO:0000255" key="3">
    <source>
        <dbReference type="PROSITE-ProRule" id="PRU00967"/>
    </source>
</evidence>
<evidence type="ECO:0000255" key="4">
    <source>
        <dbReference type="PROSITE-ProRule" id="PRU00968"/>
    </source>
</evidence>
<dbReference type="EMBL" id="AY170098">
    <property type="protein sequence ID" value="AAN85617.1"/>
    <property type="molecule type" value="Genomic_DNA"/>
</dbReference>
<dbReference type="EMBL" id="AY170099">
    <property type="protein sequence ID" value="AAN85618.1"/>
    <property type="molecule type" value="Genomic_DNA"/>
</dbReference>
<dbReference type="SMR" id="Q85PP0"/>
<dbReference type="GO" id="GO:0005743">
    <property type="term" value="C:mitochondrial inner membrane"/>
    <property type="evidence" value="ECO:0007669"/>
    <property type="project" value="UniProtKB-SubCell"/>
</dbReference>
<dbReference type="GO" id="GO:0045275">
    <property type="term" value="C:respiratory chain complex III"/>
    <property type="evidence" value="ECO:0007669"/>
    <property type="project" value="InterPro"/>
</dbReference>
<dbReference type="GO" id="GO:0046872">
    <property type="term" value="F:metal ion binding"/>
    <property type="evidence" value="ECO:0007669"/>
    <property type="project" value="UniProtKB-KW"/>
</dbReference>
<dbReference type="GO" id="GO:0008121">
    <property type="term" value="F:ubiquinol-cytochrome-c reductase activity"/>
    <property type="evidence" value="ECO:0007669"/>
    <property type="project" value="InterPro"/>
</dbReference>
<dbReference type="GO" id="GO:0006122">
    <property type="term" value="P:mitochondrial electron transport, ubiquinol to cytochrome c"/>
    <property type="evidence" value="ECO:0007669"/>
    <property type="project" value="TreeGrafter"/>
</dbReference>
<dbReference type="CDD" id="cd00290">
    <property type="entry name" value="cytochrome_b_C"/>
    <property type="match status" value="1"/>
</dbReference>
<dbReference type="CDD" id="cd00284">
    <property type="entry name" value="Cytochrome_b_N"/>
    <property type="match status" value="1"/>
</dbReference>
<dbReference type="FunFam" id="1.20.810.10:FF:000002">
    <property type="entry name" value="Cytochrome b"/>
    <property type="match status" value="1"/>
</dbReference>
<dbReference type="Gene3D" id="1.20.810.10">
    <property type="entry name" value="Cytochrome Bc1 Complex, Chain C"/>
    <property type="match status" value="1"/>
</dbReference>
<dbReference type="InterPro" id="IPR005798">
    <property type="entry name" value="Cyt_b/b6_C"/>
</dbReference>
<dbReference type="InterPro" id="IPR036150">
    <property type="entry name" value="Cyt_b/b6_C_sf"/>
</dbReference>
<dbReference type="InterPro" id="IPR005797">
    <property type="entry name" value="Cyt_b/b6_N"/>
</dbReference>
<dbReference type="InterPro" id="IPR027387">
    <property type="entry name" value="Cytb/b6-like_sf"/>
</dbReference>
<dbReference type="InterPro" id="IPR030689">
    <property type="entry name" value="Cytochrome_b"/>
</dbReference>
<dbReference type="InterPro" id="IPR048260">
    <property type="entry name" value="Cytochrome_b_C_euk/bac"/>
</dbReference>
<dbReference type="InterPro" id="IPR048259">
    <property type="entry name" value="Cytochrome_b_N_euk/bac"/>
</dbReference>
<dbReference type="InterPro" id="IPR016174">
    <property type="entry name" value="Di-haem_cyt_TM"/>
</dbReference>
<dbReference type="PANTHER" id="PTHR19271">
    <property type="entry name" value="CYTOCHROME B"/>
    <property type="match status" value="1"/>
</dbReference>
<dbReference type="PANTHER" id="PTHR19271:SF16">
    <property type="entry name" value="CYTOCHROME B"/>
    <property type="match status" value="1"/>
</dbReference>
<dbReference type="Pfam" id="PF00032">
    <property type="entry name" value="Cytochrom_B_C"/>
    <property type="match status" value="1"/>
</dbReference>
<dbReference type="Pfam" id="PF00033">
    <property type="entry name" value="Cytochrome_B"/>
    <property type="match status" value="1"/>
</dbReference>
<dbReference type="PIRSF" id="PIRSF038885">
    <property type="entry name" value="COB"/>
    <property type="match status" value="1"/>
</dbReference>
<dbReference type="SUPFAM" id="SSF81648">
    <property type="entry name" value="a domain/subunit of cytochrome bc1 complex (Ubiquinol-cytochrome c reductase)"/>
    <property type="match status" value="1"/>
</dbReference>
<dbReference type="SUPFAM" id="SSF81342">
    <property type="entry name" value="Transmembrane di-heme cytochromes"/>
    <property type="match status" value="1"/>
</dbReference>
<dbReference type="PROSITE" id="PS51003">
    <property type="entry name" value="CYTB_CTER"/>
    <property type="match status" value="1"/>
</dbReference>
<dbReference type="PROSITE" id="PS51002">
    <property type="entry name" value="CYTB_NTER"/>
    <property type="match status" value="1"/>
</dbReference>
<gene>
    <name type="primary">MT-CYB</name>
    <name type="synonym">COB</name>
    <name type="synonym">CYTB</name>
    <name type="synonym">MTCYB</name>
</gene>
<accession>Q85PP0</accession>
<accession>Q85PN9</accession>
<sequence length="379" mass="42741">MTNIRKSHPLIKIINESFIDLPAPSNISTWWNFGSLLGVCLILQILTGLFLAMHYTSDTATAFSSVTHICRDVNYGWIIRYMHANGASMFFICLFMHVGRGMYYGSHTFSETWNVGILLLFTVMATAFMGYVLPWGQMSFWGATVITNLLSAIPYIGTDLVEWIWGGFSVDKATLTRFFAFHFILPFIIAALAAVHLLFLHETGSNNPLGLTSDSDKIPFHPYYTIKDILGLLLLILMLMILVLFSPDLLGDPDNYTPANPLNTPPHIKPEWYFLFAYAILRSIPNKLGGVMALVLSILILAIVPLLHTSKQRGMMFRPLSQCLFWLLVADLLTLTWIGGQPVEYPFITIGQLASILYFFTILILMPISGMIENRLLKW</sequence>
<proteinExistence type="inferred from homology"/>
<geneLocation type="mitochondrion"/>
<reference key="1">
    <citation type="journal article" date="2003" name="Nature">
        <title>Single origin of Malagasy Carnivora from an African ancestor.</title>
        <authorList>
            <person name="Yoder A.D."/>
            <person name="Burns M.M."/>
            <person name="Zehr S."/>
            <person name="Delefosse T."/>
            <person name="Veron G."/>
            <person name="Goodman S.M."/>
            <person name="Flynn J.J."/>
        </authorList>
    </citation>
    <scope>NUCLEOTIDE SEQUENCE [GENOMIC DNA]</scope>
    <source>
        <strain>Isolate SMG-7470</strain>
        <strain>Isolate SMG-8280</strain>
    </source>
</reference>